<accession>Q6BKZ1</accession>
<reference key="1">
    <citation type="journal article" date="2004" name="Nature">
        <title>Genome evolution in yeasts.</title>
        <authorList>
            <person name="Dujon B."/>
            <person name="Sherman D."/>
            <person name="Fischer G."/>
            <person name="Durrens P."/>
            <person name="Casaregola S."/>
            <person name="Lafontaine I."/>
            <person name="de Montigny J."/>
            <person name="Marck C."/>
            <person name="Neuveglise C."/>
            <person name="Talla E."/>
            <person name="Goffard N."/>
            <person name="Frangeul L."/>
            <person name="Aigle M."/>
            <person name="Anthouard V."/>
            <person name="Babour A."/>
            <person name="Barbe V."/>
            <person name="Barnay S."/>
            <person name="Blanchin S."/>
            <person name="Beckerich J.-M."/>
            <person name="Beyne E."/>
            <person name="Bleykasten C."/>
            <person name="Boisrame A."/>
            <person name="Boyer J."/>
            <person name="Cattolico L."/>
            <person name="Confanioleri F."/>
            <person name="de Daruvar A."/>
            <person name="Despons L."/>
            <person name="Fabre E."/>
            <person name="Fairhead C."/>
            <person name="Ferry-Dumazet H."/>
            <person name="Groppi A."/>
            <person name="Hantraye F."/>
            <person name="Hennequin C."/>
            <person name="Jauniaux N."/>
            <person name="Joyet P."/>
            <person name="Kachouri R."/>
            <person name="Kerrest A."/>
            <person name="Koszul R."/>
            <person name="Lemaire M."/>
            <person name="Lesur I."/>
            <person name="Ma L."/>
            <person name="Muller H."/>
            <person name="Nicaud J.-M."/>
            <person name="Nikolski M."/>
            <person name="Oztas S."/>
            <person name="Ozier-Kalogeropoulos O."/>
            <person name="Pellenz S."/>
            <person name="Potier S."/>
            <person name="Richard G.-F."/>
            <person name="Straub M.-L."/>
            <person name="Suleau A."/>
            <person name="Swennen D."/>
            <person name="Tekaia F."/>
            <person name="Wesolowski-Louvel M."/>
            <person name="Westhof E."/>
            <person name="Wirth B."/>
            <person name="Zeniou-Meyer M."/>
            <person name="Zivanovic Y."/>
            <person name="Bolotin-Fukuhara M."/>
            <person name="Thierry A."/>
            <person name="Bouchier C."/>
            <person name="Caudron B."/>
            <person name="Scarpelli C."/>
            <person name="Gaillardin C."/>
            <person name="Weissenbach J."/>
            <person name="Wincker P."/>
            <person name="Souciet J.-L."/>
        </authorList>
    </citation>
    <scope>NUCLEOTIDE SEQUENCE [LARGE SCALE GENOMIC DNA]</scope>
    <source>
        <strain>ATCC 36239 / CBS 767 / BCRC 21394 / JCM 1990 / NBRC 0083 / IGC 2968</strain>
    </source>
</reference>
<organism>
    <name type="scientific">Debaryomyces hansenii (strain ATCC 36239 / CBS 767 / BCRC 21394 / JCM 1990 / NBRC 0083 / IGC 2968)</name>
    <name type="common">Yeast</name>
    <name type="synonym">Torulaspora hansenii</name>
    <dbReference type="NCBI Taxonomy" id="284592"/>
    <lineage>
        <taxon>Eukaryota</taxon>
        <taxon>Fungi</taxon>
        <taxon>Dikarya</taxon>
        <taxon>Ascomycota</taxon>
        <taxon>Saccharomycotina</taxon>
        <taxon>Pichiomycetes</taxon>
        <taxon>Debaryomycetaceae</taxon>
        <taxon>Debaryomyces</taxon>
    </lineage>
</organism>
<keyword id="KW-0472">Membrane</keyword>
<keyword id="KW-0496">Mitochondrion</keyword>
<keyword id="KW-0999">Mitochondrion inner membrane</keyword>
<keyword id="KW-0653">Protein transport</keyword>
<keyword id="KW-1185">Reference proteome</keyword>
<keyword id="KW-0809">Transit peptide</keyword>
<keyword id="KW-0811">Translocation</keyword>
<keyword id="KW-0812">Transmembrane</keyword>
<keyword id="KW-1133">Transmembrane helix</keyword>
<keyword id="KW-0813">Transport</keyword>
<name>PAM17_DEBHA</name>
<protein>
    <recommendedName>
        <fullName>Presequence translocated-associated motor subunit PAM17, mitochondrial</fullName>
    </recommendedName>
</protein>
<gene>
    <name type="primary">PAM17</name>
    <name type="ordered locus">DEHA2F17710g</name>
</gene>
<proteinExistence type="inferred from homology"/>
<comment type="function">
    <text evidence="1">Component of the PAM complex, a complex required for the translocation of transit peptide-containing proteins from the inner membrane into the mitochondrial matrix in an ATP-dependent manner.</text>
</comment>
<comment type="subunit">
    <text evidence="1">Component of the PAM complex, at least composed of mtHsp70 (SSC1), MGE1, TIM44, PAM16, PAM17 and PAM18.</text>
</comment>
<comment type="subcellular location">
    <subcellularLocation>
        <location evidence="1">Mitochondrion inner membrane</location>
        <topology evidence="1">Multi-pass membrane protein</topology>
    </subcellularLocation>
</comment>
<comment type="similarity">
    <text evidence="3">Belongs to the PAM17 family.</text>
</comment>
<comment type="sequence caution" evidence="3">
    <conflict type="erroneous initiation">
        <sequence resource="EMBL-CDS" id="CAG89513"/>
    </conflict>
</comment>
<sequence length="177" mass="20009">MLKNIGIYNRSINTIGRSVRFNSSGKSSLNWVEYLNLKKQNNRLNVASSAFTSLAGAFITLTYLGNIEIQVDKPIMGLDPFMVMGGAVILGGGVGYLFGPFIGTALFSLKNKAAMHQFKIKDQIFLQKIKHHRVDPSSQSFSNPVPDYYGERIYSLNNYKQWLRDCNAFRRKAKEFL</sequence>
<feature type="transit peptide" description="Mitochondrion" evidence="2">
    <location>
        <begin position="1"/>
        <end position="22"/>
    </location>
</feature>
<feature type="chain" id="PRO_0000043154" description="Presequence translocated-associated motor subunit PAM17, mitochondrial">
    <location>
        <begin position="23"/>
        <end position="177"/>
    </location>
</feature>
<feature type="transmembrane region" description="Helical" evidence="2">
    <location>
        <begin position="44"/>
        <end position="64"/>
    </location>
</feature>
<feature type="transmembrane region" description="Helical" evidence="2">
    <location>
        <begin position="82"/>
        <end position="102"/>
    </location>
</feature>
<dbReference type="EMBL" id="CR382138">
    <property type="protein sequence ID" value="CAG89513.2"/>
    <property type="status" value="ALT_INIT"/>
    <property type="molecule type" value="Genomic_DNA"/>
</dbReference>
<dbReference type="RefSeq" id="XP_461130.2">
    <property type="nucleotide sequence ID" value="XM_461130.2"/>
</dbReference>
<dbReference type="FunCoup" id="Q6BKZ1">
    <property type="interactions" value="58"/>
</dbReference>
<dbReference type="STRING" id="284592.Q6BKZ1"/>
<dbReference type="GeneID" id="2903681"/>
<dbReference type="KEGG" id="dha:DEHA2F17710g"/>
<dbReference type="eggNOG" id="ENOG502S1B1">
    <property type="taxonomic scope" value="Eukaryota"/>
</dbReference>
<dbReference type="HOGENOM" id="CLU_068297_2_0_1"/>
<dbReference type="InParanoid" id="Q6BKZ1"/>
<dbReference type="OrthoDB" id="5970083at2759"/>
<dbReference type="Proteomes" id="UP000000599">
    <property type="component" value="Chromosome F"/>
</dbReference>
<dbReference type="GO" id="GO:0001405">
    <property type="term" value="C:PAM complex, Tim23 associated import motor"/>
    <property type="evidence" value="ECO:0007669"/>
    <property type="project" value="InterPro"/>
</dbReference>
<dbReference type="GO" id="GO:0030150">
    <property type="term" value="P:protein import into mitochondrial matrix"/>
    <property type="evidence" value="ECO:0007669"/>
    <property type="project" value="TreeGrafter"/>
</dbReference>
<dbReference type="InterPro" id="IPR013875">
    <property type="entry name" value="Pam17"/>
</dbReference>
<dbReference type="PANTHER" id="PTHR28021">
    <property type="entry name" value="PRESEQUENCE TRANSLOCATED-ASSOCIATED MOTOR SUBUNIT PAM17, MITOCHONDRIAL"/>
    <property type="match status" value="1"/>
</dbReference>
<dbReference type="PANTHER" id="PTHR28021:SF1">
    <property type="entry name" value="PRESEQUENCE TRANSLOCATED-ASSOCIATED MOTOR SUBUNIT PAM17, MITOCHONDRIAL"/>
    <property type="match status" value="1"/>
</dbReference>
<dbReference type="Pfam" id="PF08566">
    <property type="entry name" value="Pam17"/>
    <property type="match status" value="1"/>
</dbReference>
<evidence type="ECO:0000250" key="1"/>
<evidence type="ECO:0000255" key="2"/>
<evidence type="ECO:0000305" key="3"/>